<name>TXC1_CUPSA</name>
<sequence length="122" mass="13840">MKVLIISAVLFITIFSNISAEIEDDFLEDESFEAEDIIPFFENEQARSCIPKHEECTNDKHNCCRKGLFKLKCQCSTFDDESGQPTERCACGRPMGHQAIETGLNIFRGLFKGKKKNKKTKG</sequence>
<feature type="signal peptide" evidence="3">
    <location>
        <begin position="1"/>
        <end position="20"/>
    </location>
</feature>
<feature type="propeptide" id="PRO_0000421161" evidence="5 10 11">
    <location>
        <begin position="21"/>
        <end position="47"/>
    </location>
</feature>
<feature type="chain" id="PRO_0000035572" description="Toxin CSTX-1" evidence="10">
    <location>
        <begin position="48"/>
        <end position="121"/>
    </location>
</feature>
<feature type="chain" id="PRO_0000035573" description="Toxin CSTX-2a" evidence="5 11">
    <location>
        <begin position="48"/>
        <end position="108"/>
    </location>
</feature>
<feature type="chain" id="PRO_0000035574" description="Toxin CSTX-2b" evidence="5 11">
    <location>
        <begin position="48"/>
        <end position="107"/>
    </location>
</feature>
<feature type="region of interest" description="Predicted alpha-helix">
    <location>
        <begin position="99"/>
        <end position="112"/>
    </location>
</feature>
<feature type="modified residue" description="Arginine amide; in CSTX-2a" evidence="6">
    <location>
        <position position="108"/>
    </location>
</feature>
<feature type="modified residue" description="Lysine amide; in omega-ctenitoxin-Cs1a" evidence="8">
    <location>
        <position position="121"/>
    </location>
</feature>
<feature type="disulfide bond" evidence="2">
    <location>
        <begin position="49"/>
        <end position="64"/>
    </location>
</feature>
<feature type="disulfide bond" evidence="2">
    <location>
        <begin position="56"/>
        <end position="73"/>
    </location>
</feature>
<feature type="disulfide bond" evidence="2">
    <location>
        <begin position="63"/>
        <end position="91"/>
    </location>
</feature>
<feature type="disulfide bond" evidence="2">
    <location>
        <begin position="75"/>
        <end position="89"/>
    </location>
</feature>
<reference key="1">
    <citation type="journal article" date="2012" name="J. Biol. Chem.">
        <title>A venom-derived neurotoxin, CsTx-1, from the spider Cupiennius salei exhibits cytolytic activities.</title>
        <authorList>
            <person name="Kuhn-Nentwig L."/>
            <person name="Fedorova I.M."/>
            <person name="Luscher B.P."/>
            <person name="Kopp L.S."/>
            <person name="Trachsel C."/>
            <person name="Schaller J."/>
            <person name="Vu X.L."/>
            <person name="Seebeck T."/>
            <person name="Streitberger K."/>
            <person name="Nentwig W."/>
            <person name="Sigel E."/>
            <person name="Magazanik L.G."/>
        </authorList>
    </citation>
    <scope>NUCLEOTIDE SEQUENCE [MRNA]</scope>
    <scope>FUNCTION AS A CYTOLYTIC TOXIN</scope>
    <scope>AMIDATION AT LYS-121</scope>
    <scope>CIRCULAR DICHROISM ANALYSIS</scope>
    <scope>ALPHA-HELICAL REGION</scope>
    <source>
        <tissue>Venom</tissue>
        <tissue>Venom gland</tissue>
    </source>
</reference>
<reference key="2">
    <citation type="journal article" date="2019" name="Toxins">
        <title>The dual prey-inactivation strategy of spiders-in-depth venomic analysis of Cupiennius salei.</title>
        <authorList>
            <person name="Kuhn-Nentwig L."/>
            <person name="Langenegger N."/>
            <person name="Heller M."/>
            <person name="Koua D."/>
            <person name="Nentwig W."/>
        </authorList>
    </citation>
    <scope>NUCLEOTIDE SEQUENCE [MRNA]</scope>
    <source>
        <tissue>Venom gland</tissue>
    </source>
</reference>
<reference key="3">
    <citation type="journal article" date="1994" name="Toxicon">
        <title>Purification of toxic peptides and the amino acid sequence of CSTX-1 from the multicomponent venom of Cupiennius salei (Araneae:Ctenidae).</title>
        <authorList>
            <person name="Kuhn-Nentwig L."/>
            <person name="Schaller J."/>
            <person name="Nentwig W."/>
        </authorList>
    </citation>
    <scope>PROTEIN SEQUENCE OF 48-121</scope>
    <scope>FUNCTION</scope>
    <scope>SUBCELLULAR LOCATION</scope>
    <source>
        <tissue>Venom</tissue>
    </source>
</reference>
<reference key="4">
    <citation type="journal article" date="1998" name="Toxicon">
        <title>Amino acid sequence of the toxic spider peptide CSTX-2 and its structural and physiological differences to CSTX-1.</title>
        <authorList>
            <person name="Nentwig W."/>
            <person name="Kuhn-Nentwig L."/>
            <person name="Schaller J."/>
            <person name="Kaempfer U."/>
        </authorList>
    </citation>
    <scope>PROTEIN SEQUENCE OF 48-108</scope>
    <scope>FUNCTION</scope>
    <scope>MASS SPECTROMETRY</scope>
</reference>
<reference key="5">
    <citation type="journal article" date="2000" name="Arch. Insect Biochem. Physiol.">
        <title>A lysine rich C-terminal tail is directly involved in the toxicity of CSTX-1, a neurotoxic peptide from the venom of the spider Cupiennius salei.</title>
        <authorList>
            <person name="Kuhn-Nentwig L."/>
            <person name="Schaller J."/>
            <person name="Kaempfer U."/>
            <person name="Imboden H."/>
            <person name="Malli H."/>
            <person name="Nentwig W."/>
        </authorList>
    </citation>
    <scope>PROTEIN SEQUENCE OF 48-108</scope>
    <scope>FUNCTION</scope>
    <scope>TOXIC DOSE</scope>
    <scope>IDENTIFICATION BY MASS SPECTROMETRY</scope>
</reference>
<reference key="6">
    <citation type="journal article" date="2007" name="Neuropharmacology">
        <title>CSTX-1, a toxin from the venom of the hunting spider Cupiennius salei, is a selective blocker of L-type calcium channels in mammalian neurons.</title>
        <authorList>
            <person name="Kubista H."/>
            <person name="Mafra R.A."/>
            <person name="Chong Y."/>
            <person name="Nicholson G.M."/>
            <person name="Beirao P.S.L."/>
            <person name="Cruz J.S."/>
            <person name="Boehm S."/>
            <person name="Nentwig W."/>
            <person name="Kuhn-Nentwig L."/>
        </authorList>
    </citation>
    <scope>PARTIAL PROTEIN SEQUENCE</scope>
    <scope>FUNCTION</scope>
    <source>
        <tissue>Venom</tissue>
    </source>
</reference>
<reference key="7">
    <citation type="journal article" date="2000" name="Cell Tissue Res.">
        <title>Immunocytochemical localization and secretion process of the toxin CSTX-1 in the venom gland of the wandering spider Cupiennius salei (Araneae: Ctenidae).</title>
        <authorList>
            <person name="Malli H."/>
            <person name="Kuhn-Nentwig L."/>
            <person name="Imboden H."/>
            <person name="Moon M.J."/>
            <person name="Wyler T."/>
        </authorList>
    </citation>
    <scope>TISSUE SPECIFICITY</scope>
</reference>
<reference key="8">
    <citation type="journal article" date="2005" name="J. Exp. Biol.">
        <title>Spider venom: enhancement of venom efficacy mediated by different synergistic strategies in Cupiennius salei.</title>
        <authorList>
            <person name="Wullschleger B."/>
            <person name="Nentwig W."/>
            <person name="Kuhn-Nentwig L."/>
        </authorList>
    </citation>
    <scope>FUNCTION IN SYNERGY WITH OTHER TOXINS</scope>
    <scope>TOXIC DOSE</scope>
    <source>
        <tissue>Venom</tissue>
    </source>
</reference>
<reference key="9">
    <citation type="journal article" date="2004" name="Toxicon">
        <title>Biochemistry, toxicology and ecology of the venom of the spider Cupiennius salei (Ctenidae).</title>
        <authorList>
            <person name="Kuhn-Nentwig L."/>
            <person name="Schaller J."/>
            <person name="Nentwig W."/>
        </authorList>
    </citation>
    <scope>REVIEW</scope>
    <scope>AMIDATION AT ARG-108</scope>
</reference>
<reference key="10">
    <citation type="journal article" date="2020" name="Toxins">
        <title>Neurotoxin merging: a strategy deployed by the venom of the spider cupiennius salei to potentiate toxicity on insects.</title>
        <authorList>
            <person name="Clemencon B."/>
            <person name="Kuhn-Nentwig L."/>
            <person name="Langenegger N."/>
            <person name="Kopp L."/>
            <person name="Peigneur S."/>
            <person name="Tytgat J."/>
            <person name="Nentwig W."/>
            <person name="Luescher B.P."/>
        </authorList>
    </citation>
    <scope>FUNCTION</scope>
    <scope>TOXIC DOSE</scope>
    <scope>SUBUNIT</scope>
    <scope>3D-STRUCTURE MODELING</scope>
    <source>
        <tissue>Venom</tissue>
    </source>
</reference>
<comment type="function">
    <molecule>Toxin CSTX-1</molecule>
    <text evidence="7 8 9">Spider venom toxin that shows calcium channel blocking activity and exhibits cytolytic activity by affecting the outer leaflet curvature and/or pore formation across the membrane (PubMed:22613721, PubMed:32290562). It blocks L-type calcium channels (Cav1/CACNA1) in mammalian neurons at nanomolar concentrations. Furthermore, it produces a slow voltage-independent block of mid/low and high voltage-activated calcium channels in cockroach neurons (PubMed:17517422). Potassium ions, histamine, M-ctenitoxin-Cs1a (AC P83619), CSTX-9 (AC P58604), and CSTX-13 (AC P83919) synergistically increase the insecticidal activity of this toxin (PubMed:15914655, PubMed:32290562). In vivo, it causes paralysis in blow flies and provokes death in drosophila (PubMed:32290562).</text>
</comment>
<comment type="function">
    <molecule>Toxin CSTX-2a</molecule>
    <text evidence="1">Blocks voltage-activated calcium channels (Cav) (By similarity). Does not induce cell membrane permeability increase when tested on Xenopus oocytes. No alpha-helical structures are detectable. Is 7-fold less neurotoxic than omega-ctenitoxin-Cs1a on drosophila flies.</text>
</comment>
<comment type="function">
    <molecule>Toxin CSTX-2b</molecule>
    <text evidence="1">Blocks voltage-activated calcium channels (Cav) (By similarity). Is 190-fold less neurotoxic than omega-ctenitoxin-Cs1a on drosophila flies.</text>
</comment>
<comment type="subunit">
    <text evidence="9 14">Monomer (Probable). Interacts with CSTX-13 (AC P83919) (Kd=430 nM), but does not interact with CSTX-9 (AC P58604) (PubMed:32290562).</text>
</comment>
<comment type="subcellular location">
    <subcellularLocation>
        <location evidence="10">Secreted</location>
    </subcellularLocation>
    <subcellularLocation>
        <location evidence="16">Target cell membrane</location>
    </subcellularLocation>
</comment>
<comment type="tissue specificity">
    <text evidence="4">Expressed by the venom gland.</text>
</comment>
<comment type="domain">
    <text evidence="1">The presence of a 'disulfide through disulfide knot' structurally defines this protein as a knottin.</text>
</comment>
<comment type="mass spectrometry" mass="8352.62" method="Electrospray" evidence="11">
    <molecule>Toxin CSTX-1</molecule>
</comment>
<comment type="mass spectrometry" mass="6865.75" method="Electrospray" evidence="11">
    <molecule>Toxin CSTX-2a</molecule>
</comment>
<comment type="mass spectrometry" mass="6709.57" method="Electrospray" evidence="11">
    <molecule>Toxin CSTX-2b</molecule>
</comment>
<comment type="toxic dose">
    <molecule>Toxin CSTX-1</molecule>
    <text evidence="5">LD(50) is 0.535 pmol/mg when intrathoracically injected into drosophila.</text>
</comment>
<comment type="toxic dose">
    <molecule>Toxin CSTX-1</molecule>
    <text evidence="9">LD(50) is 0.432 pmol/mg when intrathoracically co-injected with CSTX-9 (AC P58604) into drosophila.</text>
</comment>
<comment type="toxic dose">
    <molecule>Toxin CSTX-1</molecule>
    <text evidence="9">LD(50) is 0.075 pmol/mg when intrathoracically co-injected with CSTX-13 (AC P83919) into drosophila.</text>
</comment>
<comment type="toxic dose">
    <molecule>Toxin CSTX-2a</molecule>
    <text evidence="5">LD(50) is 2.58 pmol/mg on Drosophila.</text>
</comment>
<comment type="toxic dose">
    <molecule>Toxin CSTX-2b</molecule>
    <text evidence="5">LD(50) is 66.51 pmol/mg on Drosophila.</text>
</comment>
<comment type="miscellaneous">
    <molecule>Toxin CSTX-1</molecule>
    <text>is the most abundant neurotoxin in the venom of C.salei.</text>
</comment>
<comment type="miscellaneous">
    <molecule>Toxin CSTX-1</molecule>
    <text evidence="15">Negative results: has no antimicrobial activity against E.coli (ATCC 25922) and S.aureus (ATCC29213). Surprisingly, it destroys the E.coli mutant (SBS363) in a concentration of 31.25 uM (PubMed:22613721).</text>
</comment>
<comment type="similarity">
    <text evidence="14">Belongs to the neurotoxin 19 (CSTX) family. 04 (U1-Lctx) subfamily.</text>
</comment>
<accession>P81694</accession>
<accession>A0A4Y5UH50</accession>
<evidence type="ECO:0000250" key="1"/>
<evidence type="ECO:0000250" key="2">
    <source>
        <dbReference type="UniProtKB" id="P58604"/>
    </source>
</evidence>
<evidence type="ECO:0000255" key="3"/>
<evidence type="ECO:0000269" key="4">
    <source>
    </source>
</evidence>
<evidence type="ECO:0000269" key="5">
    <source>
    </source>
</evidence>
<evidence type="ECO:0000269" key="6">
    <source>
    </source>
</evidence>
<evidence type="ECO:0000269" key="7">
    <source>
    </source>
</evidence>
<evidence type="ECO:0000269" key="8">
    <source>
    </source>
</evidence>
<evidence type="ECO:0000269" key="9">
    <source>
    </source>
</evidence>
<evidence type="ECO:0000269" key="10">
    <source>
    </source>
</evidence>
<evidence type="ECO:0000269" key="11">
    <source ref="4"/>
</evidence>
<evidence type="ECO:0000303" key="12">
    <source>
    </source>
</evidence>
<evidence type="ECO:0000303" key="13">
    <source>
    </source>
</evidence>
<evidence type="ECO:0000305" key="14"/>
<evidence type="ECO:0000305" key="15">
    <source>
    </source>
</evidence>
<evidence type="ECO:0000305" key="16">
    <source>
    </source>
</evidence>
<dbReference type="EMBL" id="MH754547">
    <property type="protein sequence ID" value="QDC23082.1"/>
    <property type="molecule type" value="mRNA"/>
</dbReference>
<dbReference type="EMBL" id="MH754548">
    <property type="protein sequence ID" value="QDC23083.1"/>
    <property type="molecule type" value="mRNA"/>
</dbReference>
<dbReference type="PIR" id="A53356">
    <property type="entry name" value="A53356"/>
</dbReference>
<dbReference type="SMR" id="P81694"/>
<dbReference type="TCDB" id="8.B.19.2.2">
    <property type="family name" value="the sea anemone k+ channel blocker toxin, bcstx3 (bcstx3) family"/>
</dbReference>
<dbReference type="ArachnoServer" id="AS000292">
    <property type="toxin name" value="omega-ctenitoxin-Cs1a"/>
</dbReference>
<dbReference type="GO" id="GO:0005576">
    <property type="term" value="C:extracellular region"/>
    <property type="evidence" value="ECO:0007669"/>
    <property type="project" value="UniProtKB-SubCell"/>
</dbReference>
<dbReference type="GO" id="GO:0016020">
    <property type="term" value="C:membrane"/>
    <property type="evidence" value="ECO:0007669"/>
    <property type="project" value="UniProtKB-KW"/>
</dbReference>
<dbReference type="GO" id="GO:0044218">
    <property type="term" value="C:other organism cell membrane"/>
    <property type="evidence" value="ECO:0007669"/>
    <property type="project" value="UniProtKB-KW"/>
</dbReference>
<dbReference type="GO" id="GO:0005246">
    <property type="term" value="F:calcium channel regulator activity"/>
    <property type="evidence" value="ECO:0007669"/>
    <property type="project" value="UniProtKB-KW"/>
</dbReference>
<dbReference type="GO" id="GO:0090729">
    <property type="term" value="F:toxin activity"/>
    <property type="evidence" value="ECO:0007669"/>
    <property type="project" value="UniProtKB-KW"/>
</dbReference>
<dbReference type="GO" id="GO:0031640">
    <property type="term" value="P:killing of cells of another organism"/>
    <property type="evidence" value="ECO:0007669"/>
    <property type="project" value="UniProtKB-KW"/>
</dbReference>
<dbReference type="InterPro" id="IPR019553">
    <property type="entry name" value="Spider_toxin_CSTX_knottin"/>
</dbReference>
<dbReference type="InterPro" id="IPR011142">
    <property type="entry name" value="Spider_toxin_CSTX_Knottin_CS"/>
</dbReference>
<dbReference type="Pfam" id="PF10530">
    <property type="entry name" value="Toxin_35"/>
    <property type="match status" value="1"/>
</dbReference>
<dbReference type="PROSITE" id="PS60029">
    <property type="entry name" value="SPIDER_CSTX"/>
    <property type="match status" value="1"/>
</dbReference>
<protein>
    <recommendedName>
        <fullName evidence="12 13">Toxin CSTX-1</fullName>
    </recommendedName>
    <alternativeName>
        <fullName evidence="12">Omega-ctenitoxin-Cs1a</fullName>
        <shortName evidence="14">Omega-CNTX-Cs1a</shortName>
    </alternativeName>
    <component>
        <recommendedName>
            <fullName evidence="12">Toxin CSTX-2a</fullName>
        </recommendedName>
        <alternativeName>
            <fullName evidence="12">ctenitoxin-Cs2a</fullName>
        </alternativeName>
    </component>
    <component>
        <recommendedName>
            <fullName evidence="12">Toxin CSTX-2b</fullName>
        </recommendedName>
        <alternativeName>
            <fullName evidence="12">Ctenitoxin-Cs2b</fullName>
        </alternativeName>
    </component>
</protein>
<keyword id="KW-0027">Amidation</keyword>
<keyword id="KW-0108">Calcium channel impairing toxin</keyword>
<keyword id="KW-0204">Cytolysis</keyword>
<keyword id="KW-0903">Direct protein sequencing</keyword>
<keyword id="KW-1015">Disulfide bond</keyword>
<keyword id="KW-0872">Ion channel impairing toxin</keyword>
<keyword id="KW-0960">Knottin</keyword>
<keyword id="KW-0472">Membrane</keyword>
<keyword id="KW-0528">Neurotoxin</keyword>
<keyword id="KW-0964">Secreted</keyword>
<keyword id="KW-0732">Signal</keyword>
<keyword id="KW-1052">Target cell membrane</keyword>
<keyword id="KW-1053">Target membrane</keyword>
<keyword id="KW-0800">Toxin</keyword>
<keyword id="KW-1218">Voltage-gated calcium channel impairing toxin</keyword>
<organism>
    <name type="scientific">Cupiennius salei</name>
    <name type="common">American wandering spider</name>
    <dbReference type="NCBI Taxonomy" id="6928"/>
    <lineage>
        <taxon>Eukaryota</taxon>
        <taxon>Metazoa</taxon>
        <taxon>Ecdysozoa</taxon>
        <taxon>Arthropoda</taxon>
        <taxon>Chelicerata</taxon>
        <taxon>Arachnida</taxon>
        <taxon>Araneae</taxon>
        <taxon>Araneomorphae</taxon>
        <taxon>Entelegynae</taxon>
        <taxon>Lycosoidea</taxon>
        <taxon>Ctenidae</taxon>
        <taxon>Cupiennius</taxon>
    </lineage>
</organism>
<proteinExistence type="evidence at protein level"/>